<accession>Q9YFZ1</accession>
<reference key="1">
    <citation type="journal article" date="1999" name="DNA Res.">
        <title>Complete genome sequence of an aerobic hyper-thermophilic crenarchaeon, Aeropyrum pernix K1.</title>
        <authorList>
            <person name="Kawarabayasi Y."/>
            <person name="Hino Y."/>
            <person name="Horikawa H."/>
            <person name="Yamazaki S."/>
            <person name="Haikawa Y."/>
            <person name="Jin-no K."/>
            <person name="Takahashi M."/>
            <person name="Sekine M."/>
            <person name="Baba S."/>
            <person name="Ankai A."/>
            <person name="Kosugi H."/>
            <person name="Hosoyama A."/>
            <person name="Fukui S."/>
            <person name="Nagai Y."/>
            <person name="Nishijima K."/>
            <person name="Nakazawa H."/>
            <person name="Takamiya M."/>
            <person name="Masuda S."/>
            <person name="Funahashi T."/>
            <person name="Tanaka T."/>
            <person name="Kudoh Y."/>
            <person name="Yamazaki J."/>
            <person name="Kushida N."/>
            <person name="Oguchi A."/>
            <person name="Aoki K."/>
            <person name="Kubota K."/>
            <person name="Nakamura Y."/>
            <person name="Nomura N."/>
            <person name="Sako Y."/>
            <person name="Kikuchi H."/>
        </authorList>
    </citation>
    <scope>NUCLEOTIDE SEQUENCE [LARGE SCALE GENOMIC DNA]</scope>
    <source>
        <strain>ATCC 700893 / DSM 11879 / JCM 9820 / NBRC 100138 / K1</strain>
    </source>
</reference>
<keyword id="KW-0067">ATP-binding</keyword>
<keyword id="KW-0175">Coiled coil</keyword>
<keyword id="KW-0227">DNA damage</keyword>
<keyword id="KW-0234">DNA repair</keyword>
<keyword id="KW-0378">Hydrolase</keyword>
<keyword id="KW-0479">Metal-binding</keyword>
<keyword id="KW-0547">Nucleotide-binding</keyword>
<keyword id="KW-1185">Reference proteome</keyword>
<keyword id="KW-0862">Zinc</keyword>
<gene>
    <name evidence="1" type="primary">rad50</name>
    <name type="ordered locus">APE_0110</name>
</gene>
<sequence>MYVLKRLELRNIMSHFNTSIDFREGFTAIVGRNGAGKSTILEAILFSITPHQAPRRSSMISENSSRGEIYLALQSSEGRLLELRNKLIRRGGGTNTEAAIITLEGRRIASKPTGYKEEIHKILGLRGLPNPASYIEKAIIISQGGLQTLAEILSEPKELRDLLDAALGYALLKQAISNIGDVVLGVSPDGSPVKLGSKSITRLQSGYMTLRNEVLGVDREIREASKRLEELEREREELERRARDLESEAKALQSEIGKLETMEEMLVNVTSMIRSERSKLDTINTRLRYAESKISSIDDLEKRRAELRAKASLAHEVAELARLQSRLDKLGRDLEMIRDAVEKLEVSRRLKEIESARREAENRLLEARSSIKEEQRRYTLLDYRVTRGRSIVTNIRRVLSECRSKDLCGSEKPESVLERLDAVINDLESKARALDQEASALEAEARRLVQALSMLEESGGSARCPVCGAELPPGRAEAIARHYRHEAERLRKAAKEKAAEAEKARAEASRLQDKRRRIELLLSRLNQLEEGLRELGFQTPEDLAKAEQKLRMLRERLEELRKLENSLEEKVRNLSREEVALREAKTRALEVLQRLGIKEEEAREKLKTLSSESKKLERMLVSKAEDLATRLGITAYRSLDDLLEKAREALEGVDKELSAIERRLEEARRLKEEAAKLKWEAEQVMKRLEELEAEEKKLRKEVSRKSEIEARLKEVQNTLAELDDRISRIDREMGELQTRIREMKSRKASGEEALKLYLPAAASRRIMEEIGEIAYRRLLAVLEDEMNDILSRFNLDVAGVEIREKAAREIEVKAIGGNGAYRPLEAVSGGERTVLALSFVLALNKAVGGKLGFLALDEPTANLDEDRRRSLVEVLRGISVEGLVRQLVVVTHHEDVRDYADTICLVTRTQQGSRVECTY</sequence>
<comment type="function">
    <text evidence="1">Part of the Rad50/Mre11 complex, which is involved in the early steps of DNA double-strand break (DSB) repair. The complex may facilitate opening of the processed DNA ends to aid in the recruitment of HerA and NurA. Rad50 controls the balance between DNA end bridging and DNA resection via ATP-dependent structural rearrangements of the Rad50/Mre11 complex.</text>
</comment>
<comment type="cofactor">
    <cofactor evidence="1">
        <name>Zn(2+)</name>
        <dbReference type="ChEBI" id="CHEBI:29105"/>
    </cofactor>
    <text evidence="1">Binds 1 zinc ion per homodimer.</text>
</comment>
<comment type="subunit">
    <text evidence="1">Homodimer. Forms a heterotetramer composed of two Mre11 subunits and two Rad50 subunits.</text>
</comment>
<comment type="domain">
    <text evidence="1">The two conserved Cys that bind zinc constitute the zinc-hook, which separates the large intramolecular coiled coil regions. The 2 Cys residues coordinate one molecule of zinc with the help of the 2 Cys residues of the zinc-hook of another Rad50 molecule, thereby forming a V-shaped homodimer.</text>
</comment>
<comment type="similarity">
    <text evidence="1">Belongs to the SMC family. RAD50 subfamily.</text>
</comment>
<name>RAD50_AERPE</name>
<dbReference type="EMBL" id="BA000002">
    <property type="protein sequence ID" value="BAA79020.1"/>
    <property type="molecule type" value="Genomic_DNA"/>
</dbReference>
<dbReference type="PIR" id="B72765">
    <property type="entry name" value="B72765"/>
</dbReference>
<dbReference type="RefSeq" id="WP_010865496.1">
    <property type="nucleotide sequence ID" value="NC_000854.2"/>
</dbReference>
<dbReference type="SMR" id="Q9YFZ1"/>
<dbReference type="STRING" id="272557.APE_0110"/>
<dbReference type="EnsemblBacteria" id="BAA79020">
    <property type="protein sequence ID" value="BAA79020"/>
    <property type="gene ID" value="APE_0110"/>
</dbReference>
<dbReference type="GeneID" id="1445654"/>
<dbReference type="KEGG" id="ape:APE_0110"/>
<dbReference type="eggNOG" id="arCOG00368">
    <property type="taxonomic scope" value="Archaea"/>
</dbReference>
<dbReference type="Proteomes" id="UP000002518">
    <property type="component" value="Chromosome"/>
</dbReference>
<dbReference type="GO" id="GO:0005524">
    <property type="term" value="F:ATP binding"/>
    <property type="evidence" value="ECO:0007669"/>
    <property type="project" value="UniProtKB-UniRule"/>
</dbReference>
<dbReference type="GO" id="GO:0016887">
    <property type="term" value="F:ATP hydrolysis activity"/>
    <property type="evidence" value="ECO:0007669"/>
    <property type="project" value="UniProtKB-UniRule"/>
</dbReference>
<dbReference type="GO" id="GO:0008270">
    <property type="term" value="F:zinc ion binding"/>
    <property type="evidence" value="ECO:0007669"/>
    <property type="project" value="UniProtKB-UniRule"/>
</dbReference>
<dbReference type="GO" id="GO:0006302">
    <property type="term" value="P:double-strand break repair"/>
    <property type="evidence" value="ECO:0007669"/>
    <property type="project" value="UniProtKB-UniRule"/>
</dbReference>
<dbReference type="Gene3D" id="1.10.287.510">
    <property type="entry name" value="Helix hairpin bin"/>
    <property type="match status" value="1"/>
</dbReference>
<dbReference type="Gene3D" id="3.40.50.300">
    <property type="entry name" value="P-loop containing nucleotide triphosphate hydrolases"/>
    <property type="match status" value="2"/>
</dbReference>
<dbReference type="HAMAP" id="MF_00449">
    <property type="entry name" value="RAD50"/>
    <property type="match status" value="1"/>
</dbReference>
<dbReference type="InterPro" id="IPR027417">
    <property type="entry name" value="P-loop_NTPase"/>
</dbReference>
<dbReference type="InterPro" id="IPR038729">
    <property type="entry name" value="Rad50/SbcC_AAA"/>
</dbReference>
<dbReference type="InterPro" id="IPR022982">
    <property type="entry name" value="Rad50_ATPase_archaeal"/>
</dbReference>
<dbReference type="InterPro" id="IPR003395">
    <property type="entry name" value="RecF/RecN/SMC_N"/>
</dbReference>
<dbReference type="InterPro" id="IPR013134">
    <property type="entry name" value="Zn_hook_RAD50"/>
</dbReference>
<dbReference type="PANTHER" id="PTHR32114">
    <property type="entry name" value="ABC TRANSPORTER ABCH.3"/>
    <property type="match status" value="1"/>
</dbReference>
<dbReference type="PANTHER" id="PTHR32114:SF2">
    <property type="entry name" value="ABC TRANSPORTER ABCH.3"/>
    <property type="match status" value="1"/>
</dbReference>
<dbReference type="Pfam" id="PF13476">
    <property type="entry name" value="AAA_23"/>
    <property type="match status" value="1"/>
</dbReference>
<dbReference type="Pfam" id="PF04423">
    <property type="entry name" value="Rad50_zn_hook"/>
    <property type="match status" value="1"/>
</dbReference>
<dbReference type="Pfam" id="PF02463">
    <property type="entry name" value="SMC_N"/>
    <property type="match status" value="1"/>
</dbReference>
<dbReference type="SUPFAM" id="SSF52540">
    <property type="entry name" value="P-loop containing nucleoside triphosphate hydrolases"/>
    <property type="match status" value="2"/>
</dbReference>
<dbReference type="SUPFAM" id="SSF75712">
    <property type="entry name" value="Rad50 coiled-coil Zn hook"/>
    <property type="match status" value="1"/>
</dbReference>
<dbReference type="PROSITE" id="PS51131">
    <property type="entry name" value="ZN_HOOK"/>
    <property type="match status" value="1"/>
</dbReference>
<evidence type="ECO:0000255" key="1">
    <source>
        <dbReference type="HAMAP-Rule" id="MF_00449"/>
    </source>
</evidence>
<feature type="chain" id="PRO_0000138649" description="DNA double-strand break repair Rad50 ATPase">
    <location>
        <begin position="1"/>
        <end position="919"/>
    </location>
</feature>
<feature type="domain" description="Zinc-hook" evidence="1">
    <location>
        <begin position="417"/>
        <end position="516"/>
    </location>
</feature>
<feature type="coiled-coil region" evidence="1">
    <location>
        <begin position="208"/>
        <end position="268"/>
    </location>
</feature>
<feature type="coiled-coil region" evidence="1">
    <location>
        <begin position="315"/>
        <end position="379"/>
    </location>
</feature>
<feature type="coiled-coil region" evidence="1">
    <location>
        <begin position="414"/>
        <end position="458"/>
    </location>
</feature>
<feature type="coiled-coil region" evidence="1">
    <location>
        <begin position="486"/>
        <end position="515"/>
    </location>
</feature>
<feature type="coiled-coil region" evidence="1">
    <location>
        <begin position="541"/>
        <end position="595"/>
    </location>
</feature>
<feature type="coiled-coil region" evidence="1">
    <location>
        <begin position="635"/>
        <end position="749"/>
    </location>
</feature>
<feature type="binding site" evidence="1">
    <location>
        <begin position="33"/>
        <end position="39"/>
    </location>
    <ligand>
        <name>ATP</name>
        <dbReference type="ChEBI" id="CHEBI:30616"/>
    </ligand>
</feature>
<feature type="binding site" evidence="1">
    <location>
        <position position="143"/>
    </location>
    <ligand>
        <name>ATP</name>
        <dbReference type="ChEBI" id="CHEBI:30616"/>
    </ligand>
</feature>
<feature type="binding site" evidence="1">
    <location>
        <position position="464"/>
    </location>
    <ligand>
        <name>Zn(2+)</name>
        <dbReference type="ChEBI" id="CHEBI:29105"/>
    </ligand>
</feature>
<feature type="binding site" evidence="1">
    <location>
        <position position="467"/>
    </location>
    <ligand>
        <name>Zn(2+)</name>
        <dbReference type="ChEBI" id="CHEBI:29105"/>
    </ligand>
</feature>
<organism>
    <name type="scientific">Aeropyrum pernix (strain ATCC 700893 / DSM 11879 / JCM 9820 / NBRC 100138 / K1)</name>
    <dbReference type="NCBI Taxonomy" id="272557"/>
    <lineage>
        <taxon>Archaea</taxon>
        <taxon>Thermoproteota</taxon>
        <taxon>Thermoprotei</taxon>
        <taxon>Desulfurococcales</taxon>
        <taxon>Desulfurococcaceae</taxon>
        <taxon>Aeropyrum</taxon>
    </lineage>
</organism>
<proteinExistence type="inferred from homology"/>
<protein>
    <recommendedName>
        <fullName evidence="1">DNA double-strand break repair Rad50 ATPase</fullName>
    </recommendedName>
</protein>